<organism>
    <name type="scientific">Arabidopsis thaliana</name>
    <name type="common">Mouse-ear cress</name>
    <dbReference type="NCBI Taxonomy" id="3702"/>
    <lineage>
        <taxon>Eukaryota</taxon>
        <taxon>Viridiplantae</taxon>
        <taxon>Streptophyta</taxon>
        <taxon>Embryophyta</taxon>
        <taxon>Tracheophyta</taxon>
        <taxon>Spermatophyta</taxon>
        <taxon>Magnoliopsida</taxon>
        <taxon>eudicotyledons</taxon>
        <taxon>Gunneridae</taxon>
        <taxon>Pentapetalae</taxon>
        <taxon>rosids</taxon>
        <taxon>malvids</taxon>
        <taxon>Brassicales</taxon>
        <taxon>Brassicaceae</taxon>
        <taxon>Camelineae</taxon>
        <taxon>Arabidopsis</taxon>
    </lineage>
</organism>
<feature type="chain" id="PRO_0000387491" description="14.7 kDa heat shock protein">
    <location>
        <begin position="1"/>
        <end position="131"/>
    </location>
</feature>
<feature type="domain" description="sHSP" evidence="1">
    <location>
        <begin position="22"/>
        <end position="131"/>
    </location>
</feature>
<feature type="region of interest" description="Disordered" evidence="2">
    <location>
        <begin position="1"/>
        <end position="20"/>
    </location>
</feature>
<feature type="compositionally biased region" description="Polar residues" evidence="2">
    <location>
        <begin position="1"/>
        <end position="11"/>
    </location>
</feature>
<dbReference type="EMBL" id="AB025628">
    <property type="protein sequence ID" value="BAB09086.1"/>
    <property type="status" value="ALT_INIT"/>
    <property type="molecule type" value="Genomic_DNA"/>
</dbReference>
<dbReference type="EMBL" id="CP002688">
    <property type="protein sequence ID" value="AED95536.1"/>
    <property type="molecule type" value="Genomic_DNA"/>
</dbReference>
<dbReference type="EMBL" id="BT011590">
    <property type="protein sequence ID" value="AAS47596.1"/>
    <property type="molecule type" value="mRNA"/>
</dbReference>
<dbReference type="EMBL" id="BT012229">
    <property type="protein sequence ID" value="AAS76716.1"/>
    <property type="molecule type" value="mRNA"/>
</dbReference>
<dbReference type="RefSeq" id="NP_199571.2">
    <property type="nucleotide sequence ID" value="NM_124133.4"/>
</dbReference>
<dbReference type="SMR" id="Q6NLV0"/>
<dbReference type="STRING" id="3702.Q6NLV0"/>
<dbReference type="iPTMnet" id="Q6NLV0"/>
<dbReference type="PaxDb" id="3702-AT5G47600.1"/>
<dbReference type="EnsemblPlants" id="AT5G47600.1">
    <property type="protein sequence ID" value="AT5G47600.1"/>
    <property type="gene ID" value="AT5G47600"/>
</dbReference>
<dbReference type="GeneID" id="834810"/>
<dbReference type="Gramene" id="AT5G47600.1">
    <property type="protein sequence ID" value="AT5G47600.1"/>
    <property type="gene ID" value="AT5G47600"/>
</dbReference>
<dbReference type="KEGG" id="ath:AT5G47600"/>
<dbReference type="Araport" id="AT5G47600"/>
<dbReference type="TAIR" id="AT5G47600"/>
<dbReference type="HOGENOM" id="CLU_148916_0_0_1"/>
<dbReference type="InParanoid" id="Q6NLV0"/>
<dbReference type="OMA" id="INGVLWI"/>
<dbReference type="PhylomeDB" id="Q6NLV0"/>
<dbReference type="PRO" id="PR:Q6NLV0"/>
<dbReference type="Proteomes" id="UP000006548">
    <property type="component" value="Chromosome 5"/>
</dbReference>
<dbReference type="ExpressionAtlas" id="Q6NLV0">
    <property type="expression patterns" value="baseline and differential"/>
</dbReference>
<dbReference type="GO" id="GO:0005737">
    <property type="term" value="C:cytoplasm"/>
    <property type="evidence" value="ECO:0007669"/>
    <property type="project" value="UniProtKB-SubCell"/>
</dbReference>
<dbReference type="CDD" id="cd06464">
    <property type="entry name" value="ACD_sHsps-like"/>
    <property type="match status" value="1"/>
</dbReference>
<dbReference type="Gene3D" id="2.60.40.790">
    <property type="match status" value="1"/>
</dbReference>
<dbReference type="InterPro" id="IPR002068">
    <property type="entry name" value="A-crystallin/Hsp20_dom"/>
</dbReference>
<dbReference type="InterPro" id="IPR044656">
    <property type="entry name" value="HSP14.7/HSP23.5/HSP23.6-like"/>
</dbReference>
<dbReference type="InterPro" id="IPR008978">
    <property type="entry name" value="HSP20-like_chaperone"/>
</dbReference>
<dbReference type="PANTHER" id="PTHR46991:SF24">
    <property type="entry name" value="14.7 KDA HEAT SHOCK PROTEIN"/>
    <property type="match status" value="1"/>
</dbReference>
<dbReference type="PANTHER" id="PTHR46991">
    <property type="entry name" value="23.5 KDA HEAT SHOCK PROTEIN, MITOCHONDRIAL"/>
    <property type="match status" value="1"/>
</dbReference>
<dbReference type="SUPFAM" id="SSF49764">
    <property type="entry name" value="HSP20-like chaperones"/>
    <property type="match status" value="1"/>
</dbReference>
<dbReference type="PROSITE" id="PS01031">
    <property type="entry name" value="SHSP"/>
    <property type="match status" value="1"/>
</dbReference>
<protein>
    <recommendedName>
        <fullName>14.7 kDa heat shock protein</fullName>
        <shortName>AtHsp14.7</shortName>
    </recommendedName>
</protein>
<sequence length="131" mass="14687">MSRNMEVNAGSSGEIPSPIRNRFQKSGSQAVYEVTETKKSCVTRVDMPGCPESDLTYWVDANNVHFFADEPAMPEYENAGRKYGGSMIFNPEAYDVKKTKVKLINGVLWITVPKIPGKNASINVKERILHY</sequence>
<keyword id="KW-0963">Cytoplasm</keyword>
<keyword id="KW-1185">Reference proteome</keyword>
<keyword id="KW-0346">Stress response</keyword>
<gene>
    <name type="primary">HSP14.7</name>
    <name type="ordered locus">At5g47600</name>
    <name type="ORF">MNJ7.19</name>
</gene>
<accession>Q6NLV0</accession>
<accession>Q9FGJ7</accession>
<reference key="1">
    <citation type="submission" date="1999-04" db="EMBL/GenBank/DDBJ databases">
        <title>Structural analysis of Arabidopsis thaliana chromosome 5. XI.</title>
        <authorList>
            <person name="Kaneko T."/>
            <person name="Katoh T."/>
            <person name="Asamizu E."/>
            <person name="Sato S."/>
            <person name="Nakamura Y."/>
            <person name="Kotani H."/>
            <person name="Tabata S."/>
        </authorList>
    </citation>
    <scope>NUCLEOTIDE SEQUENCE [LARGE SCALE GENOMIC DNA]</scope>
    <source>
        <strain>cv. Columbia</strain>
    </source>
</reference>
<reference key="2">
    <citation type="journal article" date="2017" name="Plant J.">
        <title>Araport11: a complete reannotation of the Arabidopsis thaliana reference genome.</title>
        <authorList>
            <person name="Cheng C.Y."/>
            <person name="Krishnakumar V."/>
            <person name="Chan A.P."/>
            <person name="Thibaud-Nissen F."/>
            <person name="Schobel S."/>
            <person name="Town C.D."/>
        </authorList>
    </citation>
    <scope>GENOME REANNOTATION</scope>
    <source>
        <strain>cv. Columbia</strain>
    </source>
</reference>
<reference key="3">
    <citation type="submission" date="2004-03" db="EMBL/GenBank/DDBJ databases">
        <title>Arabidopsis cDNA clones.</title>
        <authorList>
            <person name="Kim C.J."/>
            <person name="Chen H."/>
            <person name="Cheuk R.F."/>
            <person name="Shinn P."/>
            <person name="Ecker J.R."/>
        </authorList>
    </citation>
    <scope>NUCLEOTIDE SEQUENCE [LARGE SCALE MRNA]</scope>
    <source>
        <strain>cv. Columbia</strain>
    </source>
</reference>
<comment type="subunit">
    <text>May form oligomeric structures.</text>
</comment>
<comment type="subcellular location">
    <subcellularLocation>
        <location evidence="3">Cytoplasm</location>
    </subcellularLocation>
</comment>
<comment type="similarity">
    <text evidence="1">Belongs to the small heat shock protein (HSP20) family.</text>
</comment>
<comment type="sequence caution" evidence="3">
    <conflict type="erroneous initiation">
        <sequence resource="EMBL-CDS" id="BAB09086"/>
    </conflict>
</comment>
<proteinExistence type="evidence at transcript level"/>
<name>HS147_ARATH</name>
<evidence type="ECO:0000255" key="1">
    <source>
        <dbReference type="PROSITE-ProRule" id="PRU00285"/>
    </source>
</evidence>
<evidence type="ECO:0000256" key="2">
    <source>
        <dbReference type="SAM" id="MobiDB-lite"/>
    </source>
</evidence>
<evidence type="ECO:0000305" key="3"/>